<keyword id="KW-0235">DNA replication</keyword>
<keyword id="KW-0238">DNA-binding</keyword>
<keyword id="KW-0539">Nucleus</keyword>
<keyword id="KW-1185">Reference proteome</keyword>
<evidence type="ECO:0000250" key="1"/>
<evidence type="ECO:0000250" key="2">
    <source>
        <dbReference type="UniProtKB" id="P24482"/>
    </source>
</evidence>
<evidence type="ECO:0000256" key="3">
    <source>
        <dbReference type="SAM" id="MobiDB-lite"/>
    </source>
</evidence>
<evidence type="ECO:0000305" key="4"/>
<reference key="1">
    <citation type="journal article" date="2004" name="Nature">
        <title>Genome evolution in yeasts.</title>
        <authorList>
            <person name="Dujon B."/>
            <person name="Sherman D."/>
            <person name="Fischer G."/>
            <person name="Durrens P."/>
            <person name="Casaregola S."/>
            <person name="Lafontaine I."/>
            <person name="de Montigny J."/>
            <person name="Marck C."/>
            <person name="Neuveglise C."/>
            <person name="Talla E."/>
            <person name="Goffard N."/>
            <person name="Frangeul L."/>
            <person name="Aigle M."/>
            <person name="Anthouard V."/>
            <person name="Babour A."/>
            <person name="Barbe V."/>
            <person name="Barnay S."/>
            <person name="Blanchin S."/>
            <person name="Beckerich J.-M."/>
            <person name="Beyne E."/>
            <person name="Bleykasten C."/>
            <person name="Boisrame A."/>
            <person name="Boyer J."/>
            <person name="Cattolico L."/>
            <person name="Confanioleri F."/>
            <person name="de Daruvar A."/>
            <person name="Despons L."/>
            <person name="Fabre E."/>
            <person name="Fairhead C."/>
            <person name="Ferry-Dumazet H."/>
            <person name="Groppi A."/>
            <person name="Hantraye F."/>
            <person name="Hennequin C."/>
            <person name="Jauniaux N."/>
            <person name="Joyet P."/>
            <person name="Kachouri R."/>
            <person name="Kerrest A."/>
            <person name="Koszul R."/>
            <person name="Lemaire M."/>
            <person name="Lesur I."/>
            <person name="Ma L."/>
            <person name="Muller H."/>
            <person name="Nicaud J.-M."/>
            <person name="Nikolski M."/>
            <person name="Oztas S."/>
            <person name="Ozier-Kalogeropoulos O."/>
            <person name="Pellenz S."/>
            <person name="Potier S."/>
            <person name="Richard G.-F."/>
            <person name="Straub M.-L."/>
            <person name="Suleau A."/>
            <person name="Swennen D."/>
            <person name="Tekaia F."/>
            <person name="Wesolowski-Louvel M."/>
            <person name="Westhof E."/>
            <person name="Wirth B."/>
            <person name="Zeniou-Meyer M."/>
            <person name="Zivanovic Y."/>
            <person name="Bolotin-Fukuhara M."/>
            <person name="Thierry A."/>
            <person name="Bouchier C."/>
            <person name="Caudron B."/>
            <person name="Scarpelli C."/>
            <person name="Gaillardin C."/>
            <person name="Weissenbach J."/>
            <person name="Wincker P."/>
            <person name="Souciet J.-L."/>
        </authorList>
    </citation>
    <scope>NUCLEOTIDE SEQUENCE [LARGE SCALE GENOMIC DNA]</scope>
    <source>
        <strain>ATCC 2001 / BCRC 20586 / JCM 3761 / NBRC 0622 / NRRL Y-65 / CBS 138</strain>
    </source>
</reference>
<dbReference type="EMBL" id="CR380953">
    <property type="protein sequence ID" value="CAG59713.1"/>
    <property type="molecule type" value="Genomic_DNA"/>
</dbReference>
<dbReference type="RefSeq" id="XP_446786.1">
    <property type="nucleotide sequence ID" value="XM_446786.1"/>
</dbReference>
<dbReference type="SMR" id="Q6FSK8"/>
<dbReference type="FunCoup" id="Q6FSK8">
    <property type="interactions" value="833"/>
</dbReference>
<dbReference type="STRING" id="284593.Q6FSK8"/>
<dbReference type="EnsemblFungi" id="CAGL0G09801g-T">
    <property type="protein sequence ID" value="CAGL0G09801g-T-p1"/>
    <property type="gene ID" value="CAGL0G09801g"/>
</dbReference>
<dbReference type="KEGG" id="cgr:2888291"/>
<dbReference type="CGD" id="CAL0137567">
    <property type="gene designation" value="CAGL0G09801g"/>
</dbReference>
<dbReference type="VEuPathDB" id="FungiDB:B1J91_G09801g"/>
<dbReference type="VEuPathDB" id="FungiDB:CAGL0G09801g"/>
<dbReference type="eggNOG" id="KOG3818">
    <property type="taxonomic scope" value="Eukaryota"/>
</dbReference>
<dbReference type="HOGENOM" id="CLU_010628_1_0_1"/>
<dbReference type="InParanoid" id="Q6FSK8"/>
<dbReference type="Proteomes" id="UP000002428">
    <property type="component" value="Chromosome G"/>
</dbReference>
<dbReference type="GO" id="GO:0005737">
    <property type="term" value="C:cytoplasm"/>
    <property type="evidence" value="ECO:0007669"/>
    <property type="project" value="EnsemblFungi"/>
</dbReference>
<dbReference type="GO" id="GO:0008622">
    <property type="term" value="C:epsilon DNA polymerase complex"/>
    <property type="evidence" value="ECO:0007669"/>
    <property type="project" value="EnsemblFungi"/>
</dbReference>
<dbReference type="GO" id="GO:0043596">
    <property type="term" value="C:nuclear replication fork"/>
    <property type="evidence" value="ECO:0007669"/>
    <property type="project" value="EnsemblFungi"/>
</dbReference>
<dbReference type="GO" id="GO:0030337">
    <property type="term" value="F:DNA polymerase processivity factor activity"/>
    <property type="evidence" value="ECO:0007669"/>
    <property type="project" value="EnsemblFungi"/>
</dbReference>
<dbReference type="GO" id="GO:0003887">
    <property type="term" value="F:DNA-directed DNA polymerase activity"/>
    <property type="evidence" value="ECO:0007669"/>
    <property type="project" value="EnsemblFungi"/>
</dbReference>
<dbReference type="GO" id="GO:0003690">
    <property type="term" value="F:double-stranded DNA binding"/>
    <property type="evidence" value="ECO:0007669"/>
    <property type="project" value="EnsemblFungi"/>
</dbReference>
<dbReference type="GO" id="GO:0003697">
    <property type="term" value="F:single-stranded DNA binding"/>
    <property type="evidence" value="ECO:0007669"/>
    <property type="project" value="EnsemblFungi"/>
</dbReference>
<dbReference type="GO" id="GO:0045005">
    <property type="term" value="P:DNA-templated DNA replication maintenance of fidelity"/>
    <property type="evidence" value="ECO:0007669"/>
    <property type="project" value="EnsemblFungi"/>
</dbReference>
<dbReference type="GO" id="GO:0042276">
    <property type="term" value="P:error-prone translesion synthesis"/>
    <property type="evidence" value="ECO:0007669"/>
    <property type="project" value="EnsemblFungi"/>
</dbReference>
<dbReference type="InterPro" id="IPR007185">
    <property type="entry name" value="DNA_pol_a/d/e_bsu"/>
</dbReference>
<dbReference type="InterPro" id="IPR016266">
    <property type="entry name" value="POLE2"/>
</dbReference>
<dbReference type="PANTHER" id="PTHR12708:SF0">
    <property type="entry name" value="DNA POLYMERASE EPSILON SUBUNIT 2"/>
    <property type="match status" value="1"/>
</dbReference>
<dbReference type="PANTHER" id="PTHR12708">
    <property type="entry name" value="DNA POLYMERASE EPSILON SUBUNIT B"/>
    <property type="match status" value="1"/>
</dbReference>
<dbReference type="Pfam" id="PF04042">
    <property type="entry name" value="DNA_pol_E_B"/>
    <property type="match status" value="1"/>
</dbReference>
<protein>
    <recommendedName>
        <fullName>DNA polymerase epsilon subunit B</fullName>
    </recommendedName>
    <alternativeName>
        <fullName>DNA polymerase II subunit 2</fullName>
    </alternativeName>
</protein>
<comment type="function">
    <text evidence="2">As accessory component of the DNA polymerase epsilon (DNA polymerase II) participates in chromosomal DNA replication.</text>
</comment>
<comment type="subunit">
    <text evidence="1">Heterotetramer. Consists of four subunits: POL2, DPB2, DPB3 and DPB4 (By similarity).</text>
</comment>
<comment type="subcellular location">
    <subcellularLocation>
        <location evidence="1">Nucleus</location>
    </subcellularLocation>
</comment>
<comment type="miscellaneous">
    <text>In eukaryotes there are five DNA polymerases: alpha, beta, gamma, delta, and epsilon which are responsible for different reactions of DNA synthesis.</text>
</comment>
<comment type="similarity">
    <text evidence="4">Belongs to the DNA polymerase epsilon subunit B family.</text>
</comment>
<sequence length="719" mass="81472">MFTSGKVLPTKIQPPLLRPMAYRVLSKKYGLSIKSDGLAALSDFIGSTFGMDWKRNPDTIKFLEVFATVWKQQERGLFVDSTGVKDVINELKEREKATLQESQNMASIPPKTKTYNNGGGKTTTIDRFLTKRPSPSDNDEGPLDQSIDDIPVSQATQIDEEELPMAQEISDQISSPARDQTPEEEFDNRILNWRDYFRIINTTDQKKFSYNPVKRQIFYQPPKDQLKSVLKIPNAQAKTDLFRTRYFLTRDRLLRNESFQSSHDTFNPLSSMIQLKNNINNNNQDDTPTGLSITQIKNLLGRDGQNFLILGVLKMNPKGQWSLEDASGSIDIDISQTLPSPGLFYIPGAIVLAEGIYYTVGHTFAVTSMTFPPGERRDKTLDHIGNLDLLGIHGTEKSSYIPRLDNEIKIRLHLLEQDLTHQKFVLLGGDLFLDDQHVMDGLKKVFTKLDQEAPTVIVLFGSFSSFPVHAAMSSKNISSTTEYKNNFDSLAEMLSQFENIINHTHVVLIPGPHDPWVSLCSLGANGSLPQSSIPTHFSKRMNKICKNITWASNPTRIAYLSQEIVLFRDNFLELCKRHQILFPVVESKRAEDLAELEEQMANNSIDDTTILVDRIISEKQQLPAKVLESRKVVKTLLDQGHLSPFVDSIRPISWDMDHTLTLYPIPSTLILADMSSAAYDLTYNGCKTINPGKFIHKRQARYIQFQPYLKSVSQEEVFF</sequence>
<proteinExistence type="inferred from homology"/>
<gene>
    <name type="primary">DPB2</name>
    <name type="ordered locus">CAGL0G09801g</name>
</gene>
<organism>
    <name type="scientific">Candida glabrata (strain ATCC 2001 / BCRC 20586 / JCM 3761 / NBRC 0622 / NRRL Y-65 / CBS 138)</name>
    <name type="common">Yeast</name>
    <name type="synonym">Nakaseomyces glabratus</name>
    <dbReference type="NCBI Taxonomy" id="284593"/>
    <lineage>
        <taxon>Eukaryota</taxon>
        <taxon>Fungi</taxon>
        <taxon>Dikarya</taxon>
        <taxon>Ascomycota</taxon>
        <taxon>Saccharomycotina</taxon>
        <taxon>Saccharomycetes</taxon>
        <taxon>Saccharomycetales</taxon>
        <taxon>Saccharomycetaceae</taxon>
        <taxon>Nakaseomyces</taxon>
    </lineage>
</organism>
<accession>Q6FSK8</accession>
<name>DPB2_CANGA</name>
<feature type="chain" id="PRO_0000071567" description="DNA polymerase epsilon subunit B">
    <location>
        <begin position="1"/>
        <end position="719"/>
    </location>
</feature>
<feature type="region of interest" description="Disordered" evidence="3">
    <location>
        <begin position="107"/>
        <end position="147"/>
    </location>
</feature>